<gene>
    <name evidence="1" type="primary">rps11</name>
</gene>
<keyword id="KW-0150">Chloroplast</keyword>
<keyword id="KW-0934">Plastid</keyword>
<keyword id="KW-0687">Ribonucleoprotein</keyword>
<keyword id="KW-0689">Ribosomal protein</keyword>
<keyword id="KW-0694">RNA-binding</keyword>
<keyword id="KW-0699">rRNA-binding</keyword>
<protein>
    <recommendedName>
        <fullName evidence="1">Small ribosomal subunit protein uS11c</fullName>
    </recommendedName>
    <alternativeName>
        <fullName evidence="3">30S ribosomal protein S11, chloroplastic</fullName>
    </alternativeName>
</protein>
<dbReference type="EMBL" id="EU118126">
    <property type="protein sequence ID" value="ABV02381.1"/>
    <property type="molecule type" value="Genomic_DNA"/>
</dbReference>
<dbReference type="RefSeq" id="YP_001468341.1">
    <property type="nucleotide sequence ID" value="NC_009808.1"/>
</dbReference>
<dbReference type="SMR" id="A7Y3I2"/>
<dbReference type="GeneID" id="5601249"/>
<dbReference type="GO" id="GO:0009507">
    <property type="term" value="C:chloroplast"/>
    <property type="evidence" value="ECO:0007669"/>
    <property type="project" value="UniProtKB-SubCell"/>
</dbReference>
<dbReference type="GO" id="GO:1990904">
    <property type="term" value="C:ribonucleoprotein complex"/>
    <property type="evidence" value="ECO:0007669"/>
    <property type="project" value="UniProtKB-KW"/>
</dbReference>
<dbReference type="GO" id="GO:0005840">
    <property type="term" value="C:ribosome"/>
    <property type="evidence" value="ECO:0007669"/>
    <property type="project" value="UniProtKB-KW"/>
</dbReference>
<dbReference type="GO" id="GO:0019843">
    <property type="term" value="F:rRNA binding"/>
    <property type="evidence" value="ECO:0007669"/>
    <property type="project" value="UniProtKB-UniRule"/>
</dbReference>
<dbReference type="GO" id="GO:0003735">
    <property type="term" value="F:structural constituent of ribosome"/>
    <property type="evidence" value="ECO:0007669"/>
    <property type="project" value="InterPro"/>
</dbReference>
<dbReference type="GO" id="GO:0006412">
    <property type="term" value="P:translation"/>
    <property type="evidence" value="ECO:0007669"/>
    <property type="project" value="UniProtKB-UniRule"/>
</dbReference>
<dbReference type="FunFam" id="3.30.420.80:FF:000003">
    <property type="entry name" value="30S ribosomal protein S11, chloroplastic"/>
    <property type="match status" value="1"/>
</dbReference>
<dbReference type="Gene3D" id="3.30.420.80">
    <property type="entry name" value="Ribosomal protein S11"/>
    <property type="match status" value="1"/>
</dbReference>
<dbReference type="HAMAP" id="MF_01310">
    <property type="entry name" value="Ribosomal_uS11"/>
    <property type="match status" value="1"/>
</dbReference>
<dbReference type="InterPro" id="IPR001971">
    <property type="entry name" value="Ribosomal_uS11"/>
</dbReference>
<dbReference type="InterPro" id="IPR019981">
    <property type="entry name" value="Ribosomal_uS11_bac-type"/>
</dbReference>
<dbReference type="InterPro" id="IPR018102">
    <property type="entry name" value="Ribosomal_uS11_CS"/>
</dbReference>
<dbReference type="InterPro" id="IPR036967">
    <property type="entry name" value="Ribosomal_uS11_sf"/>
</dbReference>
<dbReference type="NCBIfam" id="NF003698">
    <property type="entry name" value="PRK05309.1"/>
    <property type="match status" value="1"/>
</dbReference>
<dbReference type="NCBIfam" id="TIGR03632">
    <property type="entry name" value="uS11_bact"/>
    <property type="match status" value="1"/>
</dbReference>
<dbReference type="PANTHER" id="PTHR11759">
    <property type="entry name" value="40S RIBOSOMAL PROTEIN S14/30S RIBOSOMAL PROTEIN S11"/>
    <property type="match status" value="1"/>
</dbReference>
<dbReference type="Pfam" id="PF00411">
    <property type="entry name" value="Ribosomal_S11"/>
    <property type="match status" value="1"/>
</dbReference>
<dbReference type="PIRSF" id="PIRSF002131">
    <property type="entry name" value="Ribosomal_S11"/>
    <property type="match status" value="1"/>
</dbReference>
<dbReference type="SUPFAM" id="SSF53137">
    <property type="entry name" value="Translational machinery components"/>
    <property type="match status" value="1"/>
</dbReference>
<dbReference type="PROSITE" id="PS00054">
    <property type="entry name" value="RIBOSOMAL_S11"/>
    <property type="match status" value="1"/>
</dbReference>
<accession>A7Y3I2</accession>
<feature type="chain" id="PRO_0000323367" description="Small ribosomal subunit protein uS11c">
    <location>
        <begin position="1"/>
        <end position="138"/>
    </location>
</feature>
<feature type="region of interest" description="Disordered" evidence="2">
    <location>
        <begin position="1"/>
        <end position="23"/>
    </location>
</feature>
<name>RR11_IPOPU</name>
<organism>
    <name type="scientific">Ipomoea purpurea</name>
    <name type="common">Common morning glory</name>
    <name type="synonym">Pharbitis purpurea</name>
    <dbReference type="NCBI Taxonomy" id="4121"/>
    <lineage>
        <taxon>Eukaryota</taxon>
        <taxon>Viridiplantae</taxon>
        <taxon>Streptophyta</taxon>
        <taxon>Embryophyta</taxon>
        <taxon>Tracheophyta</taxon>
        <taxon>Spermatophyta</taxon>
        <taxon>Magnoliopsida</taxon>
        <taxon>eudicotyledons</taxon>
        <taxon>Gunneridae</taxon>
        <taxon>Pentapetalae</taxon>
        <taxon>asterids</taxon>
        <taxon>lamiids</taxon>
        <taxon>Solanales</taxon>
        <taxon>Convolvulaceae</taxon>
        <taxon>Ipomoeeae</taxon>
        <taxon>Ipomoea</taxon>
    </lineage>
</organism>
<evidence type="ECO:0000255" key="1">
    <source>
        <dbReference type="HAMAP-Rule" id="MF_01310"/>
    </source>
</evidence>
<evidence type="ECO:0000256" key="2">
    <source>
        <dbReference type="SAM" id="MobiDB-lite"/>
    </source>
</evidence>
<evidence type="ECO:0000305" key="3"/>
<comment type="subunit">
    <text evidence="1">Part of the 30S ribosomal subunit.</text>
</comment>
<comment type="subcellular location">
    <subcellularLocation>
        <location>Plastid</location>
        <location>Chloroplast</location>
    </subcellularLocation>
</comment>
<comment type="similarity">
    <text evidence="1">Belongs to the universal ribosomal protein uS11 family.</text>
</comment>
<sequence>MAKAIPRRSSRRNGRIGSRKSARRIPKGVIHVQASFNNTIVTVTDVRGRVVSWSSAGTSGFKGTRRGTPFAAETAASNAIRTVVDRGMLRAEVMIKGPGLGRDAALRAILQSGILLTFVRDVTPMPHNGCRPPKKRRV</sequence>
<proteinExistence type="inferred from homology"/>
<geneLocation type="chloroplast"/>
<reference key="1">
    <citation type="journal article" date="2007" name="BMC Plant Biol.">
        <title>Complete plastid genome sequences suggest strong selection for retention of photosynthetic genes in the parasitic plant genus Cuscuta.</title>
        <authorList>
            <person name="McNeal J.R."/>
            <person name="Kuehl J.V."/>
            <person name="Boore J.L."/>
            <person name="dePamphilis C.W."/>
        </authorList>
    </citation>
    <scope>NUCLEOTIDE SEQUENCE [LARGE SCALE GENOMIC DNA]</scope>
</reference>